<dbReference type="EC" id="2.3.1.225" evidence="10"/>
<dbReference type="EC" id="2.3.1.-" evidence="1"/>
<dbReference type="EMBL" id="AY668951">
    <property type="protein sequence ID" value="AAU89705.1"/>
    <property type="molecule type" value="mRNA"/>
</dbReference>
<dbReference type="EMBL" id="AK017158">
    <property type="protein sequence ID" value="BAB30620.1"/>
    <property type="molecule type" value="mRNA"/>
</dbReference>
<dbReference type="EMBL" id="AK031184">
    <property type="protein sequence ID" value="BAC27294.1"/>
    <property type="molecule type" value="mRNA"/>
</dbReference>
<dbReference type="EMBL" id="AK049270">
    <property type="protein sequence ID" value="BAC33648.1"/>
    <property type="molecule type" value="mRNA"/>
</dbReference>
<dbReference type="EMBL" id="AK140182">
    <property type="protein sequence ID" value="BAE24268.1"/>
    <property type="molecule type" value="mRNA"/>
</dbReference>
<dbReference type="EMBL" id="AK163174">
    <property type="protein sequence ID" value="BAE37221.1"/>
    <property type="molecule type" value="mRNA"/>
</dbReference>
<dbReference type="EMBL" id="AK170139">
    <property type="protein sequence ID" value="BAE41590.1"/>
    <property type="molecule type" value="mRNA"/>
</dbReference>
<dbReference type="EMBL" id="BC019536">
    <property type="protein sequence ID" value="AAH19536.1"/>
    <property type="molecule type" value="mRNA"/>
</dbReference>
<dbReference type="CCDS" id="CCDS27162.1">
    <molecule id="Q5Y5T1-2"/>
</dbReference>
<dbReference type="CCDS" id="CCDS88676.1">
    <molecule id="Q5Y5T1-1"/>
</dbReference>
<dbReference type="RefSeq" id="NP_001347026.1">
    <molecule id="Q5Y5T1-1"/>
    <property type="nucleotide sequence ID" value="NM_001360097.1"/>
</dbReference>
<dbReference type="RefSeq" id="NP_083768.4">
    <molecule id="Q5Y5T1-2"/>
    <property type="nucleotide sequence ID" value="NM_029492.4"/>
</dbReference>
<dbReference type="SMR" id="Q5Y5T1"/>
<dbReference type="BioGRID" id="217877">
    <property type="interactions" value="1"/>
</dbReference>
<dbReference type="FunCoup" id="Q5Y5T1">
    <property type="interactions" value="2992"/>
</dbReference>
<dbReference type="STRING" id="10090.ENSMUSP00000086900"/>
<dbReference type="iPTMnet" id="Q5Y5T1"/>
<dbReference type="PhosphoSitePlus" id="Q5Y5T1"/>
<dbReference type="SwissPalm" id="Q5Y5T1"/>
<dbReference type="jPOST" id="Q5Y5T1"/>
<dbReference type="PaxDb" id="10090-ENSMUSP00000086900"/>
<dbReference type="PeptideAtlas" id="Q5Y5T1"/>
<dbReference type="ProteomicsDB" id="302122">
    <molecule id="Q5Y5T1-1"/>
</dbReference>
<dbReference type="ProteomicsDB" id="302123">
    <molecule id="Q5Y5T1-2"/>
</dbReference>
<dbReference type="Pumba" id="Q5Y5T1"/>
<dbReference type="Antibodypedia" id="4929">
    <property type="antibodies" value="187 antibodies from 24 providers"/>
</dbReference>
<dbReference type="DNASU" id="75965"/>
<dbReference type="Ensembl" id="ENSMUST00000089473.5">
    <molecule id="Q5Y5T1-2"/>
    <property type="protein sequence ID" value="ENSMUSP00000086900.4"/>
    <property type="gene ID" value="ENSMUSG00000021969.9"/>
</dbReference>
<dbReference type="Ensembl" id="ENSMUST00000226057.2">
    <molecule id="Q5Y5T1-1"/>
    <property type="protein sequence ID" value="ENSMUSP00000153568.2"/>
    <property type="gene ID" value="ENSMUSG00000021969.9"/>
</dbReference>
<dbReference type="GeneID" id="75965"/>
<dbReference type="KEGG" id="mmu:75965"/>
<dbReference type="UCSC" id="uc007udr.1">
    <molecule id="Q5Y5T1-2"/>
    <property type="organism name" value="mouse"/>
</dbReference>
<dbReference type="UCSC" id="uc007uds.1">
    <molecule id="Q5Y5T1-1"/>
    <property type="organism name" value="mouse"/>
</dbReference>
<dbReference type="AGR" id="MGI:1923215"/>
<dbReference type="CTD" id="253832"/>
<dbReference type="MGI" id="MGI:1923215">
    <property type="gene designation" value="Zdhhc20"/>
</dbReference>
<dbReference type="VEuPathDB" id="HostDB:ENSMUSG00000021969"/>
<dbReference type="eggNOG" id="KOG1315">
    <property type="taxonomic scope" value="Eukaryota"/>
</dbReference>
<dbReference type="GeneTree" id="ENSGT00940000153716"/>
<dbReference type="HOGENOM" id="CLU_027721_1_3_1"/>
<dbReference type="InParanoid" id="Q5Y5T1"/>
<dbReference type="OMA" id="EQHANNT"/>
<dbReference type="OrthoDB" id="9909019at2759"/>
<dbReference type="PhylomeDB" id="Q5Y5T1"/>
<dbReference type="TreeFam" id="TF316044"/>
<dbReference type="BioGRID-ORCS" id="75965">
    <property type="hits" value="6 hits in 77 CRISPR screens"/>
</dbReference>
<dbReference type="ChiTaRS" id="Zdhhc20">
    <property type="organism name" value="mouse"/>
</dbReference>
<dbReference type="PRO" id="PR:Q5Y5T1"/>
<dbReference type="Proteomes" id="UP000000589">
    <property type="component" value="Chromosome 14"/>
</dbReference>
<dbReference type="RNAct" id="Q5Y5T1">
    <property type="molecule type" value="protein"/>
</dbReference>
<dbReference type="Bgee" id="ENSMUSG00000021969">
    <property type="expression patterns" value="Expressed in seminal vesicle and 241 other cell types or tissues"/>
</dbReference>
<dbReference type="GO" id="GO:0005789">
    <property type="term" value="C:endoplasmic reticulum membrane"/>
    <property type="evidence" value="ECO:0007669"/>
    <property type="project" value="UniProtKB-SubCell"/>
</dbReference>
<dbReference type="GO" id="GO:0033116">
    <property type="term" value="C:endoplasmic reticulum-Golgi intermediate compartment membrane"/>
    <property type="evidence" value="ECO:0007669"/>
    <property type="project" value="UniProtKB-SubCell"/>
</dbReference>
<dbReference type="GO" id="GO:0000139">
    <property type="term" value="C:Golgi membrane"/>
    <property type="evidence" value="ECO:0000250"/>
    <property type="project" value="UniProtKB"/>
</dbReference>
<dbReference type="GO" id="GO:0048471">
    <property type="term" value="C:perinuclear region of cytoplasm"/>
    <property type="evidence" value="ECO:0007669"/>
    <property type="project" value="UniProtKB-SubCell"/>
</dbReference>
<dbReference type="GO" id="GO:0005886">
    <property type="term" value="C:plasma membrane"/>
    <property type="evidence" value="ECO:0007669"/>
    <property type="project" value="UniProtKB-SubCell"/>
</dbReference>
<dbReference type="GO" id="GO:0019705">
    <property type="term" value="F:protein-cysteine S-myristoyltransferase activity"/>
    <property type="evidence" value="ECO:0007669"/>
    <property type="project" value="RHEA"/>
</dbReference>
<dbReference type="GO" id="GO:0019706">
    <property type="term" value="F:protein-cysteine S-palmitoyltransferase activity"/>
    <property type="evidence" value="ECO:0000250"/>
    <property type="project" value="UniProtKB"/>
</dbReference>
<dbReference type="GO" id="GO:0140439">
    <property type="term" value="F:protein-cysteine S-stearoyltransferase activity"/>
    <property type="evidence" value="ECO:0007669"/>
    <property type="project" value="RHEA"/>
</dbReference>
<dbReference type="GO" id="GO:0008270">
    <property type="term" value="F:zinc ion binding"/>
    <property type="evidence" value="ECO:0000250"/>
    <property type="project" value="UniProtKB"/>
</dbReference>
<dbReference type="GO" id="GO:0018230">
    <property type="term" value="P:peptidyl-L-cysteine S-palmitoylation"/>
    <property type="evidence" value="ECO:0000250"/>
    <property type="project" value="UniProtKB"/>
</dbReference>
<dbReference type="GO" id="GO:0044794">
    <property type="term" value="P:positive regulation by host of viral process"/>
    <property type="evidence" value="ECO:0007669"/>
    <property type="project" value="Ensembl"/>
</dbReference>
<dbReference type="GO" id="GO:0018345">
    <property type="term" value="P:protein palmitoylation"/>
    <property type="evidence" value="ECO:0000250"/>
    <property type="project" value="UniProtKB"/>
</dbReference>
<dbReference type="InterPro" id="IPR001594">
    <property type="entry name" value="Palmitoyltrfase_DHHC"/>
</dbReference>
<dbReference type="InterPro" id="IPR039859">
    <property type="entry name" value="PFA4/ZDH16/20/ERF2-like"/>
</dbReference>
<dbReference type="PANTHER" id="PTHR12246">
    <property type="entry name" value="PALMITOYLTRANSFERASE ZDHHC16"/>
    <property type="match status" value="1"/>
</dbReference>
<dbReference type="Pfam" id="PF01529">
    <property type="entry name" value="DHHC"/>
    <property type="match status" value="1"/>
</dbReference>
<dbReference type="PROSITE" id="PS50216">
    <property type="entry name" value="DHHC"/>
    <property type="match status" value="1"/>
</dbReference>
<feature type="chain" id="PRO_0000212907" description="Palmitoyltransferase ZDHHC20">
    <location>
        <begin position="1"/>
        <end position="380"/>
    </location>
</feature>
<feature type="topological domain" description="Cytoplasmic" evidence="1">
    <location>
        <begin position="1"/>
        <end position="14"/>
    </location>
</feature>
<feature type="transmembrane region" description="Helical" evidence="1">
    <location>
        <begin position="15"/>
        <end position="35"/>
    </location>
</feature>
<feature type="topological domain" description="Lumenal" evidence="1">
    <location>
        <begin position="36"/>
        <end position="53"/>
    </location>
</feature>
<feature type="transmembrane region" description="Helical" evidence="1">
    <location>
        <begin position="54"/>
        <end position="74"/>
    </location>
</feature>
<feature type="topological domain" description="Cytoplasmic" evidence="1">
    <location>
        <begin position="75"/>
        <end position="169"/>
    </location>
</feature>
<feature type="transmembrane region" description="Helical" evidence="1">
    <location>
        <begin position="170"/>
        <end position="190"/>
    </location>
</feature>
<feature type="topological domain" description="Lumenal" evidence="1">
    <location>
        <begin position="191"/>
        <end position="222"/>
    </location>
</feature>
<feature type="transmembrane region" description="Helical" evidence="1">
    <location>
        <begin position="223"/>
        <end position="246"/>
    </location>
</feature>
<feature type="topological domain" description="Cytoplasmic" evidence="1">
    <location>
        <begin position="247"/>
        <end position="380"/>
    </location>
</feature>
<feature type="domain" description="DHHC" evidence="3">
    <location>
        <begin position="126"/>
        <end position="176"/>
    </location>
</feature>
<feature type="active site" description="S-palmitoyl cysteine intermediate" evidence="1">
    <location>
        <position position="156"/>
    </location>
</feature>
<feature type="binding site" evidence="1">
    <location>
        <position position="128"/>
    </location>
    <ligand>
        <name>Zn(2+)</name>
        <dbReference type="ChEBI" id="CHEBI:29105"/>
        <label>1</label>
    </ligand>
</feature>
<feature type="binding site" evidence="1">
    <location>
        <position position="131"/>
    </location>
    <ligand>
        <name>Zn(2+)</name>
        <dbReference type="ChEBI" id="CHEBI:29105"/>
        <label>1</label>
    </ligand>
</feature>
<feature type="binding site" evidence="1">
    <location>
        <position position="135"/>
    </location>
    <ligand>
        <name>substrate</name>
    </ligand>
</feature>
<feature type="binding site" evidence="1">
    <location>
        <begin position="140"/>
        <end position="143"/>
    </location>
    <ligand>
        <name>substrate</name>
    </ligand>
</feature>
<feature type="binding site" evidence="1">
    <location>
        <position position="141"/>
    </location>
    <ligand>
        <name>Zn(2+)</name>
        <dbReference type="ChEBI" id="CHEBI:29105"/>
        <label>1</label>
    </ligand>
</feature>
<feature type="binding site" evidence="1">
    <location>
        <position position="142"/>
    </location>
    <ligand>
        <name>Zn(2+)</name>
        <dbReference type="ChEBI" id="CHEBI:29105"/>
        <label>2</label>
    </ligand>
</feature>
<feature type="binding site" evidence="1">
    <location>
        <position position="145"/>
    </location>
    <ligand>
        <name>Zn(2+)</name>
        <dbReference type="ChEBI" id="CHEBI:29105"/>
        <label>2</label>
    </ligand>
</feature>
<feature type="binding site" evidence="1">
    <location>
        <position position="148"/>
    </location>
    <ligand>
        <name>Zn(2+)</name>
        <dbReference type="ChEBI" id="CHEBI:29105"/>
        <label>1</label>
    </ligand>
</feature>
<feature type="binding site" evidence="1">
    <location>
        <position position="155"/>
    </location>
    <ligand>
        <name>Zn(2+)</name>
        <dbReference type="ChEBI" id="CHEBI:29105"/>
        <label>2</label>
    </ligand>
</feature>
<feature type="binding site" evidence="1">
    <location>
        <position position="162"/>
    </location>
    <ligand>
        <name>Zn(2+)</name>
        <dbReference type="ChEBI" id="CHEBI:29105"/>
        <label>2</label>
    </ligand>
</feature>
<feature type="site" description="Important for selectivity toward medium-length fatty acids" evidence="1">
    <location>
        <position position="29"/>
    </location>
</feature>
<feature type="site" description="Important for selectivity toward medium-length fatty acids" evidence="1">
    <location>
        <position position="181"/>
    </location>
</feature>
<feature type="modified residue" description="Phosphoserine" evidence="1">
    <location>
        <position position="320"/>
    </location>
</feature>
<feature type="modified residue" description="Phosphoserine" evidence="1">
    <location>
        <position position="345"/>
    </location>
</feature>
<feature type="modified residue" description="Phosphoserine" evidence="1">
    <location>
        <position position="354"/>
    </location>
</feature>
<feature type="splice variant" id="VSP_016278" description="In isoform 2." evidence="6 8">
    <location>
        <begin position="199"/>
        <end position="210"/>
    </location>
</feature>
<feature type="sequence conflict" description="In Ref. 2; BAE41590." evidence="9" ref="2">
    <original>K</original>
    <variation>R</variation>
    <location>
        <position position="130"/>
    </location>
</feature>
<feature type="sequence conflict" description="In Ref. 2; BAB30620." evidence="9" ref="2">
    <original>F</original>
    <variation>Y</variation>
    <location>
        <position position="243"/>
    </location>
</feature>
<feature type="sequence conflict" description="In Ref. 2; BAE41590." evidence="9" ref="2">
    <original>T</original>
    <variation>I</variation>
    <location>
        <position position="370"/>
    </location>
</feature>
<protein>
    <recommendedName>
        <fullName evidence="10">Palmitoyltransferase ZDHHC20</fullName>
        <ecNumber evidence="10">2.3.1.225</ecNumber>
    </recommendedName>
    <alternativeName>
        <fullName evidence="1">Acyltransferase ZDHHC20</fullName>
        <ecNumber evidence="1">2.3.1.-</ecNumber>
    </alternativeName>
    <alternativeName>
        <fullName evidence="7">DHHC domain-containing cysteine-rich protein 20</fullName>
        <shortName evidence="7">DHHC-20</shortName>
    </alternativeName>
    <alternativeName>
        <fullName evidence="11">Zinc finger DHHC domain-containing protein 20</fullName>
    </alternativeName>
</protein>
<proteinExistence type="evidence at protein level"/>
<organism>
    <name type="scientific">Mus musculus</name>
    <name type="common">Mouse</name>
    <dbReference type="NCBI Taxonomy" id="10090"/>
    <lineage>
        <taxon>Eukaryota</taxon>
        <taxon>Metazoa</taxon>
        <taxon>Chordata</taxon>
        <taxon>Craniata</taxon>
        <taxon>Vertebrata</taxon>
        <taxon>Euteleostomi</taxon>
        <taxon>Mammalia</taxon>
        <taxon>Eutheria</taxon>
        <taxon>Euarchontoglires</taxon>
        <taxon>Glires</taxon>
        <taxon>Rodentia</taxon>
        <taxon>Myomorpha</taxon>
        <taxon>Muroidea</taxon>
        <taxon>Muridae</taxon>
        <taxon>Murinae</taxon>
        <taxon>Mus</taxon>
        <taxon>Mus</taxon>
    </lineage>
</organism>
<keyword id="KW-0012">Acyltransferase</keyword>
<keyword id="KW-0025">Alternative splicing</keyword>
<keyword id="KW-1003">Cell membrane</keyword>
<keyword id="KW-0963">Cytoplasm</keyword>
<keyword id="KW-0256">Endoplasmic reticulum</keyword>
<keyword id="KW-0333">Golgi apparatus</keyword>
<keyword id="KW-0449">Lipoprotein</keyword>
<keyword id="KW-0472">Membrane</keyword>
<keyword id="KW-0479">Metal-binding</keyword>
<keyword id="KW-0564">Palmitate</keyword>
<keyword id="KW-0597">Phosphoprotein</keyword>
<keyword id="KW-1185">Reference proteome</keyword>
<keyword id="KW-0808">Transferase</keyword>
<keyword id="KW-0812">Transmembrane</keyword>
<keyword id="KW-1133">Transmembrane helix</keyword>
<keyword id="KW-0862">Zinc</keyword>
<accession>Q5Y5T1</accession>
<accession>Q3TDL1</accession>
<accession>Q8VCL6</accession>
<accession>Q9D3Q8</accession>
<reference key="1">
    <citation type="journal article" date="2004" name="Neuron">
        <title>Identification of PSD-95 palmitoylating enzymes.</title>
        <authorList>
            <person name="Fukata M."/>
            <person name="Fukata Y."/>
            <person name="Adesnik H."/>
            <person name="Nicoll R.A."/>
            <person name="Bredt D.S."/>
        </authorList>
    </citation>
    <scope>NUCLEOTIDE SEQUENCE [MRNA] (ISOFORM 1)</scope>
    <scope>FUNCTION</scope>
    <scope>CATALYTIC ACTIVITY</scope>
    <scope>TISSUE SPECIFICITY</scope>
    <source>
        <strain>C57BL/6J</strain>
        <tissue>Brain</tissue>
    </source>
</reference>
<reference key="2">
    <citation type="journal article" date="2005" name="Science">
        <title>The transcriptional landscape of the mammalian genome.</title>
        <authorList>
            <person name="Carninci P."/>
            <person name="Kasukawa T."/>
            <person name="Katayama S."/>
            <person name="Gough J."/>
            <person name="Frith M.C."/>
            <person name="Maeda N."/>
            <person name="Oyama R."/>
            <person name="Ravasi T."/>
            <person name="Lenhard B."/>
            <person name="Wells C."/>
            <person name="Kodzius R."/>
            <person name="Shimokawa K."/>
            <person name="Bajic V.B."/>
            <person name="Brenner S.E."/>
            <person name="Batalov S."/>
            <person name="Forrest A.R."/>
            <person name="Zavolan M."/>
            <person name="Davis M.J."/>
            <person name="Wilming L.G."/>
            <person name="Aidinis V."/>
            <person name="Allen J.E."/>
            <person name="Ambesi-Impiombato A."/>
            <person name="Apweiler R."/>
            <person name="Aturaliya R.N."/>
            <person name="Bailey T.L."/>
            <person name="Bansal M."/>
            <person name="Baxter L."/>
            <person name="Beisel K.W."/>
            <person name="Bersano T."/>
            <person name="Bono H."/>
            <person name="Chalk A.M."/>
            <person name="Chiu K.P."/>
            <person name="Choudhary V."/>
            <person name="Christoffels A."/>
            <person name="Clutterbuck D.R."/>
            <person name="Crowe M.L."/>
            <person name="Dalla E."/>
            <person name="Dalrymple B.P."/>
            <person name="de Bono B."/>
            <person name="Della Gatta G."/>
            <person name="di Bernardo D."/>
            <person name="Down T."/>
            <person name="Engstrom P."/>
            <person name="Fagiolini M."/>
            <person name="Faulkner G."/>
            <person name="Fletcher C.F."/>
            <person name="Fukushima T."/>
            <person name="Furuno M."/>
            <person name="Futaki S."/>
            <person name="Gariboldi M."/>
            <person name="Georgii-Hemming P."/>
            <person name="Gingeras T.R."/>
            <person name="Gojobori T."/>
            <person name="Green R.E."/>
            <person name="Gustincich S."/>
            <person name="Harbers M."/>
            <person name="Hayashi Y."/>
            <person name="Hensch T.K."/>
            <person name="Hirokawa N."/>
            <person name="Hill D."/>
            <person name="Huminiecki L."/>
            <person name="Iacono M."/>
            <person name="Ikeo K."/>
            <person name="Iwama A."/>
            <person name="Ishikawa T."/>
            <person name="Jakt M."/>
            <person name="Kanapin A."/>
            <person name="Katoh M."/>
            <person name="Kawasawa Y."/>
            <person name="Kelso J."/>
            <person name="Kitamura H."/>
            <person name="Kitano H."/>
            <person name="Kollias G."/>
            <person name="Krishnan S.P."/>
            <person name="Kruger A."/>
            <person name="Kummerfeld S.K."/>
            <person name="Kurochkin I.V."/>
            <person name="Lareau L.F."/>
            <person name="Lazarevic D."/>
            <person name="Lipovich L."/>
            <person name="Liu J."/>
            <person name="Liuni S."/>
            <person name="McWilliam S."/>
            <person name="Madan Babu M."/>
            <person name="Madera M."/>
            <person name="Marchionni L."/>
            <person name="Matsuda H."/>
            <person name="Matsuzawa S."/>
            <person name="Miki H."/>
            <person name="Mignone F."/>
            <person name="Miyake S."/>
            <person name="Morris K."/>
            <person name="Mottagui-Tabar S."/>
            <person name="Mulder N."/>
            <person name="Nakano N."/>
            <person name="Nakauchi H."/>
            <person name="Ng P."/>
            <person name="Nilsson R."/>
            <person name="Nishiguchi S."/>
            <person name="Nishikawa S."/>
            <person name="Nori F."/>
            <person name="Ohara O."/>
            <person name="Okazaki Y."/>
            <person name="Orlando V."/>
            <person name="Pang K.C."/>
            <person name="Pavan W.J."/>
            <person name="Pavesi G."/>
            <person name="Pesole G."/>
            <person name="Petrovsky N."/>
            <person name="Piazza S."/>
            <person name="Reed J."/>
            <person name="Reid J.F."/>
            <person name="Ring B.Z."/>
            <person name="Ringwald M."/>
            <person name="Rost B."/>
            <person name="Ruan Y."/>
            <person name="Salzberg S.L."/>
            <person name="Sandelin A."/>
            <person name="Schneider C."/>
            <person name="Schoenbach C."/>
            <person name="Sekiguchi K."/>
            <person name="Semple C.A."/>
            <person name="Seno S."/>
            <person name="Sessa L."/>
            <person name="Sheng Y."/>
            <person name="Shibata Y."/>
            <person name="Shimada H."/>
            <person name="Shimada K."/>
            <person name="Silva D."/>
            <person name="Sinclair B."/>
            <person name="Sperling S."/>
            <person name="Stupka E."/>
            <person name="Sugiura K."/>
            <person name="Sultana R."/>
            <person name="Takenaka Y."/>
            <person name="Taki K."/>
            <person name="Tammoja K."/>
            <person name="Tan S.L."/>
            <person name="Tang S."/>
            <person name="Taylor M.S."/>
            <person name="Tegner J."/>
            <person name="Teichmann S.A."/>
            <person name="Ueda H.R."/>
            <person name="van Nimwegen E."/>
            <person name="Verardo R."/>
            <person name="Wei C.L."/>
            <person name="Yagi K."/>
            <person name="Yamanishi H."/>
            <person name="Zabarovsky E."/>
            <person name="Zhu S."/>
            <person name="Zimmer A."/>
            <person name="Hide W."/>
            <person name="Bult C."/>
            <person name="Grimmond S.M."/>
            <person name="Teasdale R.D."/>
            <person name="Liu E.T."/>
            <person name="Brusic V."/>
            <person name="Quackenbush J."/>
            <person name="Wahlestedt C."/>
            <person name="Mattick J.S."/>
            <person name="Hume D.A."/>
            <person name="Kai C."/>
            <person name="Sasaki D."/>
            <person name="Tomaru Y."/>
            <person name="Fukuda S."/>
            <person name="Kanamori-Katayama M."/>
            <person name="Suzuki M."/>
            <person name="Aoki J."/>
            <person name="Arakawa T."/>
            <person name="Iida J."/>
            <person name="Imamura K."/>
            <person name="Itoh M."/>
            <person name="Kato T."/>
            <person name="Kawaji H."/>
            <person name="Kawagashira N."/>
            <person name="Kawashima T."/>
            <person name="Kojima M."/>
            <person name="Kondo S."/>
            <person name="Konno H."/>
            <person name="Nakano K."/>
            <person name="Ninomiya N."/>
            <person name="Nishio T."/>
            <person name="Okada M."/>
            <person name="Plessy C."/>
            <person name="Shibata K."/>
            <person name="Shiraki T."/>
            <person name="Suzuki S."/>
            <person name="Tagami M."/>
            <person name="Waki K."/>
            <person name="Watahiki A."/>
            <person name="Okamura-Oho Y."/>
            <person name="Suzuki H."/>
            <person name="Kawai J."/>
            <person name="Hayashizaki Y."/>
        </authorList>
    </citation>
    <scope>NUCLEOTIDE SEQUENCE [LARGE SCALE MRNA] (ISOFORMS 1 AND 2)</scope>
    <source>
        <strain>C57BL/6J</strain>
        <tissue>Cerebellum</tissue>
        <tissue>Corpora quadrigemina</tissue>
        <tissue>Forelimb</tissue>
        <tissue>Ovary</tissue>
        <tissue>Uterus</tissue>
    </source>
</reference>
<reference key="3">
    <citation type="journal article" date="2004" name="Genome Res.">
        <title>The status, quality, and expansion of the NIH full-length cDNA project: the Mammalian Gene Collection (MGC).</title>
        <authorList>
            <consortium name="The MGC Project Team"/>
        </authorList>
    </citation>
    <scope>NUCLEOTIDE SEQUENCE [LARGE SCALE MRNA] (ISOFORM 2)</scope>
    <source>
        <strain>FVB/N</strain>
        <tissue>Mammary gland</tissue>
    </source>
</reference>
<reference key="4">
    <citation type="journal article" date="2010" name="Cell">
        <title>A tissue-specific atlas of mouse protein phosphorylation and expression.</title>
        <authorList>
            <person name="Huttlin E.L."/>
            <person name="Jedrychowski M.P."/>
            <person name="Elias J.E."/>
            <person name="Goswami T."/>
            <person name="Rad R."/>
            <person name="Beausoleil S.A."/>
            <person name="Villen J."/>
            <person name="Haas W."/>
            <person name="Sowa M.E."/>
            <person name="Gygi S.P."/>
        </authorList>
    </citation>
    <scope>IDENTIFICATION BY MASS SPECTROMETRY [LARGE SCALE ANALYSIS]</scope>
    <source>
        <tissue>Spleen</tissue>
    </source>
</reference>
<reference key="5">
    <citation type="journal article" date="2017" name="J. Physiol. (Lond.)">
        <title>Post-translational palmitoylation controls the voltage gating and lipid raft association of the CALHM1 channel.</title>
        <authorList>
            <person name="Taruno A."/>
            <person name="Sun H."/>
            <person name="Nakajo K."/>
            <person name="Murakami T."/>
            <person name="Ohsaki Y."/>
            <person name="Kido M.A."/>
            <person name="Ono F."/>
            <person name="Marunaka Y."/>
        </authorList>
    </citation>
    <scope>FUNCTION</scope>
</reference>
<gene>
    <name evidence="11" type="primary">Zdhhc20</name>
</gene>
<name>ZDH20_MOUSE</name>
<sequence>MAPWTLWRCCQRVVGWVPVLFITFVVVWSYYAYVVELCVSTISRTGEKGKTVVYLVAFHLFFVMFVWSYWMTIFTSPASPSKEFYLSNSEKERYEKEFSQERQQDILRRAARDLPIYTTSASKAIRYCEKCQLIKPDRAHHCSACDRCVLKMDHHCPWVNNCVGFTNYKFFMLFLLYSLLYCLFVAATVLEYFIKFWTLCRRKSTENCPKNEPTVLNFPSAKFHVLFLFFVSAMFFVSVLSLFSYHCWLVGKNRTTIESFRAPMFSYGIDGNGFSLGCSKNWRQVFGDEKKYWLVPIFSSLGDGCSFPARLVGMDPEQASVANQSDYVRSIGSNQPFPIKPLSESKNRLLDSESQWLENGAEEGVTKSGTNNHVTVEIEN</sequence>
<evidence type="ECO:0000250" key="1">
    <source>
        <dbReference type="UniProtKB" id="Q5W0Z9"/>
    </source>
</evidence>
<evidence type="ECO:0000255" key="2"/>
<evidence type="ECO:0000255" key="3">
    <source>
        <dbReference type="PROSITE-ProRule" id="PRU00067"/>
    </source>
</evidence>
<evidence type="ECO:0000269" key="4">
    <source>
    </source>
</evidence>
<evidence type="ECO:0000269" key="5">
    <source>
    </source>
</evidence>
<evidence type="ECO:0000303" key="6">
    <source>
    </source>
</evidence>
<evidence type="ECO:0000303" key="7">
    <source>
    </source>
</evidence>
<evidence type="ECO:0000303" key="8">
    <source>
    </source>
</evidence>
<evidence type="ECO:0000305" key="9"/>
<evidence type="ECO:0000305" key="10">
    <source>
    </source>
</evidence>
<evidence type="ECO:0000312" key="11">
    <source>
        <dbReference type="MGI" id="MGI:1923215"/>
    </source>
</evidence>
<comment type="function">
    <text evidence="1 5 10">Palmitoyltransferase that could catalyze the addition of palmitate onto various protein substrates (PubMed:15603741). Catalyzes palmitoylation of Cys residues in the cytoplasmic C-terminus of EGFR, and modulates the duration of EGFR signaling by modulating palmitoylation-dependent EGFR internalization and degradation. Has a preference for acyl-CoA with C16 fatty acid chains. Can also utilize acyl-CoA with C14 and C18 fatty acid chains (By similarity). May palmitoylate CALHM1 subunit of gustatory voltage-gated ion channels and modulate channel gating and kinetics.</text>
</comment>
<comment type="catalytic activity">
    <reaction evidence="10">
        <text>L-cysteinyl-[protein] + hexadecanoyl-CoA = S-hexadecanoyl-L-cysteinyl-[protein] + CoA</text>
        <dbReference type="Rhea" id="RHEA:36683"/>
        <dbReference type="Rhea" id="RHEA-COMP:10131"/>
        <dbReference type="Rhea" id="RHEA-COMP:11032"/>
        <dbReference type="ChEBI" id="CHEBI:29950"/>
        <dbReference type="ChEBI" id="CHEBI:57287"/>
        <dbReference type="ChEBI" id="CHEBI:57379"/>
        <dbReference type="ChEBI" id="CHEBI:74151"/>
        <dbReference type="EC" id="2.3.1.225"/>
    </reaction>
    <physiologicalReaction direction="left-to-right" evidence="10">
        <dbReference type="Rhea" id="RHEA:36684"/>
    </physiologicalReaction>
</comment>
<comment type="catalytic activity">
    <reaction evidence="1">
        <text>L-cysteinyl-[protein] + tetradecanoyl-CoA = S-tetradecanoyl-L-cysteinyl-[protein] + CoA</text>
        <dbReference type="Rhea" id="RHEA:59736"/>
        <dbReference type="Rhea" id="RHEA-COMP:10131"/>
        <dbReference type="Rhea" id="RHEA-COMP:15433"/>
        <dbReference type="ChEBI" id="CHEBI:29950"/>
        <dbReference type="ChEBI" id="CHEBI:57287"/>
        <dbReference type="ChEBI" id="CHEBI:57385"/>
        <dbReference type="ChEBI" id="CHEBI:143199"/>
    </reaction>
    <physiologicalReaction direction="left-to-right" evidence="1">
        <dbReference type="Rhea" id="RHEA:59737"/>
    </physiologicalReaction>
</comment>
<comment type="catalytic activity">
    <reaction evidence="1">
        <text>L-cysteinyl-[protein] + octadecanoyl-CoA = S-octadecanoyl-L-cysteinyl-[protein] + CoA</text>
        <dbReference type="Rhea" id="RHEA:59740"/>
        <dbReference type="Rhea" id="RHEA-COMP:10131"/>
        <dbReference type="Rhea" id="RHEA-COMP:15434"/>
        <dbReference type="ChEBI" id="CHEBI:29950"/>
        <dbReference type="ChEBI" id="CHEBI:57287"/>
        <dbReference type="ChEBI" id="CHEBI:57394"/>
        <dbReference type="ChEBI" id="CHEBI:143200"/>
    </reaction>
    <physiologicalReaction direction="left-to-right" evidence="1">
        <dbReference type="Rhea" id="RHEA:59741"/>
    </physiologicalReaction>
</comment>
<comment type="subcellular location">
    <subcellularLocation>
        <location evidence="1">Golgi apparatus membrane</location>
        <topology evidence="1">Multi-pass membrane protein</topology>
    </subcellularLocation>
    <subcellularLocation>
        <location evidence="1">Cell membrane</location>
        <topology evidence="1">Multi-pass membrane protein</topology>
    </subcellularLocation>
    <subcellularLocation>
        <location evidence="1">Cytoplasm</location>
        <location evidence="1">Perinuclear region</location>
    </subcellularLocation>
    <subcellularLocation>
        <location evidence="1">Endoplasmic reticulum membrane</location>
        <topology evidence="2">Multi-pass membrane protein</topology>
    </subcellularLocation>
    <subcellularLocation>
        <location evidence="1">Endoplasmic reticulum-Golgi intermediate compartment membrane</location>
        <topology evidence="2">Multi-pass membrane protein</topology>
    </subcellularLocation>
</comment>
<comment type="alternative products">
    <event type="alternative splicing"/>
    <isoform>
        <id>Q5Y5T1-1</id>
        <name>1</name>
        <sequence type="displayed"/>
    </isoform>
    <isoform>
        <id>Q5Y5T1-2</id>
        <name>2</name>
        <sequence type="described" ref="VSP_016278"/>
    </isoform>
</comment>
<comment type="tissue specificity">
    <text evidence="4">Highest levels in lung.</text>
</comment>
<comment type="domain">
    <text evidence="1">The DHHC domain is required for palmitoyltransferase activity.</text>
</comment>
<comment type="PTM">
    <text evidence="1">Autopalmitoylated (in vitro).</text>
</comment>
<comment type="similarity">
    <text evidence="9">Belongs to the DHHC palmitoyltransferase family.</text>
</comment>